<protein>
    <recommendedName>
        <fullName evidence="1">tRNA pseudouridine synthase B</fullName>
        <ecNumber evidence="1">5.4.99.25</ecNumber>
    </recommendedName>
    <alternativeName>
        <fullName evidence="1">tRNA pseudouridine(55) synthase</fullName>
        <shortName evidence="1">Psi55 synthase</shortName>
    </alternativeName>
    <alternativeName>
        <fullName evidence="1">tRNA pseudouridylate synthase</fullName>
    </alternativeName>
    <alternativeName>
        <fullName evidence="1">tRNA-uridine isomerase</fullName>
    </alternativeName>
</protein>
<reference key="1">
    <citation type="journal article" date="2001" name="Nature">
        <title>Genome sequence of enterohaemorrhagic Escherichia coli O157:H7.</title>
        <authorList>
            <person name="Perna N.T."/>
            <person name="Plunkett G. III"/>
            <person name="Burland V."/>
            <person name="Mau B."/>
            <person name="Glasner J.D."/>
            <person name="Rose D.J."/>
            <person name="Mayhew G.F."/>
            <person name="Evans P.S."/>
            <person name="Gregor J."/>
            <person name="Kirkpatrick H.A."/>
            <person name="Posfai G."/>
            <person name="Hackett J."/>
            <person name="Klink S."/>
            <person name="Boutin A."/>
            <person name="Shao Y."/>
            <person name="Miller L."/>
            <person name="Grotbeck E.J."/>
            <person name="Davis N.W."/>
            <person name="Lim A."/>
            <person name="Dimalanta E.T."/>
            <person name="Potamousis K."/>
            <person name="Apodaca J."/>
            <person name="Anantharaman T.S."/>
            <person name="Lin J."/>
            <person name="Yen G."/>
            <person name="Schwartz D.C."/>
            <person name="Welch R.A."/>
            <person name="Blattner F.R."/>
        </authorList>
    </citation>
    <scope>NUCLEOTIDE SEQUENCE [LARGE SCALE GENOMIC DNA]</scope>
    <source>
        <strain>O157:H7 / EDL933 / ATCC 700927 / EHEC</strain>
    </source>
</reference>
<reference key="2">
    <citation type="journal article" date="2001" name="DNA Res.">
        <title>Complete genome sequence of enterohemorrhagic Escherichia coli O157:H7 and genomic comparison with a laboratory strain K-12.</title>
        <authorList>
            <person name="Hayashi T."/>
            <person name="Makino K."/>
            <person name="Ohnishi M."/>
            <person name="Kurokawa K."/>
            <person name="Ishii K."/>
            <person name="Yokoyama K."/>
            <person name="Han C.-G."/>
            <person name="Ohtsubo E."/>
            <person name="Nakayama K."/>
            <person name="Murata T."/>
            <person name="Tanaka M."/>
            <person name="Tobe T."/>
            <person name="Iida T."/>
            <person name="Takami H."/>
            <person name="Honda T."/>
            <person name="Sasakawa C."/>
            <person name="Ogasawara N."/>
            <person name="Yasunaga T."/>
            <person name="Kuhara S."/>
            <person name="Shiba T."/>
            <person name="Hattori M."/>
            <person name="Shinagawa H."/>
        </authorList>
    </citation>
    <scope>NUCLEOTIDE SEQUENCE [LARGE SCALE GENOMIC DNA]</scope>
    <source>
        <strain>O157:H7 / Sakai / RIMD 0509952 / EHEC</strain>
    </source>
</reference>
<dbReference type="EC" id="5.4.99.25" evidence="1"/>
<dbReference type="EMBL" id="AE005174">
    <property type="protein sequence ID" value="AAG58302.1"/>
    <property type="molecule type" value="Genomic_DNA"/>
</dbReference>
<dbReference type="EMBL" id="BA000007">
    <property type="protein sequence ID" value="BAB37470.1"/>
    <property type="molecule type" value="Genomic_DNA"/>
</dbReference>
<dbReference type="PIR" id="B85980">
    <property type="entry name" value="B85980"/>
</dbReference>
<dbReference type="PIR" id="G91134">
    <property type="entry name" value="G91134"/>
</dbReference>
<dbReference type="RefSeq" id="NP_312074.1">
    <property type="nucleotide sequence ID" value="NC_002695.1"/>
</dbReference>
<dbReference type="RefSeq" id="WP_000089698.1">
    <property type="nucleotide sequence ID" value="NZ_VOAI01000014.1"/>
</dbReference>
<dbReference type="SMR" id="P60342"/>
<dbReference type="STRING" id="155864.Z4527"/>
<dbReference type="GeneID" id="916110"/>
<dbReference type="GeneID" id="93778817"/>
<dbReference type="KEGG" id="ece:Z4527"/>
<dbReference type="KEGG" id="ecs:ECs_4047"/>
<dbReference type="PATRIC" id="fig|386585.9.peg.4226"/>
<dbReference type="eggNOG" id="COG0130">
    <property type="taxonomic scope" value="Bacteria"/>
</dbReference>
<dbReference type="HOGENOM" id="CLU_032087_0_3_6"/>
<dbReference type="OMA" id="VDKPSGF"/>
<dbReference type="Proteomes" id="UP000000558">
    <property type="component" value="Chromosome"/>
</dbReference>
<dbReference type="Proteomes" id="UP000002519">
    <property type="component" value="Chromosome"/>
</dbReference>
<dbReference type="GO" id="GO:0003723">
    <property type="term" value="F:RNA binding"/>
    <property type="evidence" value="ECO:0007669"/>
    <property type="project" value="InterPro"/>
</dbReference>
<dbReference type="GO" id="GO:0160148">
    <property type="term" value="F:tRNA pseudouridine(55) synthase activity"/>
    <property type="evidence" value="ECO:0007669"/>
    <property type="project" value="UniProtKB-EC"/>
</dbReference>
<dbReference type="GO" id="GO:1990481">
    <property type="term" value="P:mRNA pseudouridine synthesis"/>
    <property type="evidence" value="ECO:0007669"/>
    <property type="project" value="TreeGrafter"/>
</dbReference>
<dbReference type="GO" id="GO:0031119">
    <property type="term" value="P:tRNA pseudouridine synthesis"/>
    <property type="evidence" value="ECO:0007669"/>
    <property type="project" value="UniProtKB-UniRule"/>
</dbReference>
<dbReference type="CDD" id="cd02573">
    <property type="entry name" value="PseudoU_synth_EcTruB"/>
    <property type="match status" value="1"/>
</dbReference>
<dbReference type="CDD" id="cd21152">
    <property type="entry name" value="PUA_TruB_bacterial"/>
    <property type="match status" value="1"/>
</dbReference>
<dbReference type="FunFam" id="2.30.130.10:FF:000004">
    <property type="entry name" value="tRNA pseudouridine synthase B"/>
    <property type="match status" value="1"/>
</dbReference>
<dbReference type="FunFam" id="3.30.2350.10:FF:000003">
    <property type="entry name" value="tRNA pseudouridine synthase B"/>
    <property type="match status" value="1"/>
</dbReference>
<dbReference type="Gene3D" id="3.30.2350.10">
    <property type="entry name" value="Pseudouridine synthase"/>
    <property type="match status" value="1"/>
</dbReference>
<dbReference type="Gene3D" id="2.30.130.10">
    <property type="entry name" value="PUA domain"/>
    <property type="match status" value="1"/>
</dbReference>
<dbReference type="HAMAP" id="MF_01080">
    <property type="entry name" value="TruB_bact"/>
    <property type="match status" value="1"/>
</dbReference>
<dbReference type="InterPro" id="IPR020103">
    <property type="entry name" value="PsdUridine_synth_cat_dom_sf"/>
</dbReference>
<dbReference type="InterPro" id="IPR002501">
    <property type="entry name" value="PsdUridine_synth_N"/>
</dbReference>
<dbReference type="InterPro" id="IPR015947">
    <property type="entry name" value="PUA-like_sf"/>
</dbReference>
<dbReference type="InterPro" id="IPR036974">
    <property type="entry name" value="PUA_sf"/>
</dbReference>
<dbReference type="InterPro" id="IPR014780">
    <property type="entry name" value="tRNA_psdUridine_synth_TruB"/>
</dbReference>
<dbReference type="InterPro" id="IPR015240">
    <property type="entry name" value="tRNA_sdUridine_synth_fam1_C"/>
</dbReference>
<dbReference type="InterPro" id="IPR032819">
    <property type="entry name" value="TruB_C"/>
</dbReference>
<dbReference type="NCBIfam" id="TIGR00431">
    <property type="entry name" value="TruB"/>
    <property type="match status" value="1"/>
</dbReference>
<dbReference type="PANTHER" id="PTHR13767:SF2">
    <property type="entry name" value="PSEUDOURIDYLATE SYNTHASE TRUB1"/>
    <property type="match status" value="1"/>
</dbReference>
<dbReference type="PANTHER" id="PTHR13767">
    <property type="entry name" value="TRNA-PSEUDOURIDINE SYNTHASE"/>
    <property type="match status" value="1"/>
</dbReference>
<dbReference type="Pfam" id="PF09157">
    <property type="entry name" value="TruB-C_2"/>
    <property type="match status" value="1"/>
</dbReference>
<dbReference type="Pfam" id="PF16198">
    <property type="entry name" value="TruB_C_2"/>
    <property type="match status" value="1"/>
</dbReference>
<dbReference type="Pfam" id="PF01509">
    <property type="entry name" value="TruB_N"/>
    <property type="match status" value="1"/>
</dbReference>
<dbReference type="SUPFAM" id="SSF55120">
    <property type="entry name" value="Pseudouridine synthase"/>
    <property type="match status" value="1"/>
</dbReference>
<dbReference type="SUPFAM" id="SSF88697">
    <property type="entry name" value="PUA domain-like"/>
    <property type="match status" value="1"/>
</dbReference>
<sequence>MSRPRRRGRDINGVLLLDKPQGMSSNDALQKVKRIYNANRAGHTGALDPLATGMLPICLGEATKFSQYLLDSDKRYRVIARLGQRTDTSDADGQIVEERPVTFSAEQLAAALDTFRGDIEQIPSMYSALKYQGKKLYEYARQGIEVPREARPITVYELLFIRHEGNELELEIHCSKGTYIRTIIDDLGEKLGCGAHVIYLRRLAVSKYPVERMVTLEHLRELVEQAEQQDIPAAELLDPLLMPMDSPASDYPVVNLPLTSSVYFKNGNPVRTSGAPLEGLVRVTEGENGKFIGMGEIDDEGRVAPRRLVVEYPA</sequence>
<comment type="function">
    <text evidence="1">Responsible for synthesis of pseudouridine from uracil-55 in the psi GC loop of transfer RNAs.</text>
</comment>
<comment type="catalytic activity">
    <reaction evidence="1">
        <text>uridine(55) in tRNA = pseudouridine(55) in tRNA</text>
        <dbReference type="Rhea" id="RHEA:42532"/>
        <dbReference type="Rhea" id="RHEA-COMP:10101"/>
        <dbReference type="Rhea" id="RHEA-COMP:10102"/>
        <dbReference type="ChEBI" id="CHEBI:65314"/>
        <dbReference type="ChEBI" id="CHEBI:65315"/>
        <dbReference type="EC" id="5.4.99.25"/>
    </reaction>
</comment>
<comment type="similarity">
    <text evidence="1">Belongs to the pseudouridine synthase TruB family. Type 1 subfamily.</text>
</comment>
<accession>P60342</accession>
<accession>P09171</accession>
<accession>P76671</accession>
<feature type="chain" id="PRO_0000121832" description="tRNA pseudouridine synthase B">
    <location>
        <begin position="1"/>
        <end position="314"/>
    </location>
</feature>
<feature type="active site" description="Nucleophile" evidence="1">
    <location>
        <position position="48"/>
    </location>
</feature>
<feature type="binding site" evidence="1">
    <location>
        <position position="43"/>
    </location>
    <ligand>
        <name>substrate</name>
    </ligand>
</feature>
<feature type="binding site" evidence="1">
    <location>
        <position position="76"/>
    </location>
    <ligand>
        <name>substrate</name>
    </ligand>
</feature>
<feature type="binding site" evidence="1">
    <location>
        <position position="179"/>
    </location>
    <ligand>
        <name>substrate</name>
    </ligand>
</feature>
<feature type="binding site" evidence="1">
    <location>
        <position position="200"/>
    </location>
    <ligand>
        <name>substrate</name>
    </ligand>
</feature>
<name>TRUB_ECO57</name>
<organism>
    <name type="scientific">Escherichia coli O157:H7</name>
    <dbReference type="NCBI Taxonomy" id="83334"/>
    <lineage>
        <taxon>Bacteria</taxon>
        <taxon>Pseudomonadati</taxon>
        <taxon>Pseudomonadota</taxon>
        <taxon>Gammaproteobacteria</taxon>
        <taxon>Enterobacterales</taxon>
        <taxon>Enterobacteriaceae</taxon>
        <taxon>Escherichia</taxon>
    </lineage>
</organism>
<keyword id="KW-0413">Isomerase</keyword>
<keyword id="KW-1185">Reference proteome</keyword>
<keyword id="KW-0819">tRNA processing</keyword>
<proteinExistence type="inferred from homology"/>
<gene>
    <name evidence="1" type="primary">truB</name>
    <name type="ordered locus">Z4527</name>
    <name type="ordered locus">ECs4047</name>
</gene>
<evidence type="ECO:0000255" key="1">
    <source>
        <dbReference type="HAMAP-Rule" id="MF_01080"/>
    </source>
</evidence>